<comment type="function">
    <text evidence="5 6 7 8">DNA polymerase that promotes microhomology-mediated end-joining (MMEJ), an alternative non-homologous end-joining (NHEJ) machinery triggered in response to double-strand breaks in DNA (PubMed:18472307, PubMed:31593615). MMEJ is an error-prone repair pathway that produces deletions of sequences from the strand being repaired and promotes genomic rearrangements, such as telomere fusions (PubMed:24614976). Required to prevent extensive loss of sequences near G-quadruplex (G4) DNA sites, which are prone to cause genome alterations, by generating deletions (PubMed:24496117).</text>
</comment>
<comment type="catalytic activity">
    <reaction evidence="2">
        <text>DNA(n) + a 2'-deoxyribonucleoside 5'-triphosphate = DNA(n+1) + diphosphate</text>
        <dbReference type="Rhea" id="RHEA:22508"/>
        <dbReference type="Rhea" id="RHEA-COMP:17339"/>
        <dbReference type="Rhea" id="RHEA-COMP:17340"/>
        <dbReference type="ChEBI" id="CHEBI:33019"/>
        <dbReference type="ChEBI" id="CHEBI:61560"/>
        <dbReference type="ChEBI" id="CHEBI:173112"/>
        <dbReference type="EC" id="2.7.7.7"/>
    </reaction>
</comment>
<comment type="subcellular location">
    <subcellularLocation>
        <location evidence="1">Nucleus</location>
    </subcellularLocation>
</comment>
<comment type="disruption phenotype">
    <text evidence="5">RNAi-mediated knockdown results in defective DNA damage-induced checkpoint activation as indicated by an increased number of apoptotic corpses and enlarged nuclei in the mitotic zone of the germline in response to DNA interstrand cross-linking agents such as nitrogen mustard.</text>
</comment>
<comment type="similarity">
    <text evidence="10">Belongs to the DNA polymerase type-A family.</text>
</comment>
<reference key="1">
    <citation type="journal article" date="1998" name="Science">
        <title>Genome sequence of the nematode C. elegans: a platform for investigating biology.</title>
        <authorList>
            <consortium name="The C. elegans sequencing consortium"/>
        </authorList>
    </citation>
    <scope>NUCLEOTIDE SEQUENCE [LARGE SCALE GENOMIC DNA]</scope>
    <source>
        <strain>Bristol N2</strain>
    </source>
</reference>
<reference key="2">
    <citation type="journal article" date="2008" name="DNA Repair">
        <title>Caenorhabditis elegans POLQ-1 and HEL-308 function in two distinct DNA interstrand cross-link repair pathways.</title>
        <authorList>
            <person name="Muzzini D.M."/>
            <person name="Plevani P."/>
            <person name="Boulton S.J."/>
            <person name="Cassata G."/>
            <person name="Marini F."/>
        </authorList>
    </citation>
    <scope>FUNCTION</scope>
    <scope>DISRUPTION PHENOTYPE</scope>
</reference>
<reference key="3">
    <citation type="journal article" date="2014" name="Genome Res.">
        <title>Polymerase theta-mediated end joining of replication-associated DNA breaks in C. elegans.</title>
        <authorList>
            <person name="Roerink S.F."/>
            <person name="van Schendel R."/>
            <person name="Tijsterman M."/>
        </authorList>
    </citation>
    <scope>FUNCTION</scope>
</reference>
<reference key="4">
    <citation type="journal article" date="2014" name="Nat. Commun.">
        <title>A Polymerase Theta-dependent repair pathway suppresses extensive genomic instability at endogenous G4 DNA sites.</title>
        <authorList>
            <person name="Koole W."/>
            <person name="van Schendel R."/>
            <person name="Karambelas A.E."/>
            <person name="van Heteren J.T."/>
            <person name="Okihara K.L."/>
            <person name="Tijsterman M."/>
        </authorList>
    </citation>
    <scope>FUNCTION</scope>
    <scope>MUTAGENESIS OF PRO-1359</scope>
</reference>
<reference key="5">
    <citation type="journal article" date="2020" name="FEBS J.">
        <title>Hypersensitivity to DNA double-strand breaks associated with PARG deficiency is suppressed by exo-1 and polq-1 mutations in Caenorhabditis elegans.</title>
        <authorList>
            <person name="Bae W."/>
            <person name="Park J.H."/>
            <person name="Lee M.H."/>
            <person name="Park H.W."/>
            <person name="Koo H.S."/>
        </authorList>
    </citation>
    <scope>FUNCTION</scope>
</reference>
<name>DPOLQ_CAEEL</name>
<organism>
    <name type="scientific">Caenorhabditis elegans</name>
    <dbReference type="NCBI Taxonomy" id="6239"/>
    <lineage>
        <taxon>Eukaryota</taxon>
        <taxon>Metazoa</taxon>
        <taxon>Ecdysozoa</taxon>
        <taxon>Nematoda</taxon>
        <taxon>Chromadorea</taxon>
        <taxon>Rhabditida</taxon>
        <taxon>Rhabditina</taxon>
        <taxon>Rhabditomorpha</taxon>
        <taxon>Rhabditoidea</taxon>
        <taxon>Rhabditidae</taxon>
        <taxon>Peloderinae</taxon>
        <taxon>Caenorhabditis</taxon>
    </lineage>
</organism>
<accession>A0FLQ6</accession>
<accession>G4SPM6</accession>
<keyword id="KW-0067">ATP-binding</keyword>
<keyword id="KW-0227">DNA damage</keyword>
<keyword id="KW-0234">DNA repair</keyword>
<keyword id="KW-0239">DNA-directed DNA polymerase</keyword>
<keyword id="KW-0547">Nucleotide-binding</keyword>
<keyword id="KW-0548">Nucleotidyltransferase</keyword>
<keyword id="KW-0539">Nucleus</keyword>
<keyword id="KW-1185">Reference proteome</keyword>
<keyword id="KW-0808">Transferase</keyword>
<evidence type="ECO:0000250" key="1">
    <source>
        <dbReference type="UniProtKB" id="O18475"/>
    </source>
</evidence>
<evidence type="ECO:0000250" key="2">
    <source>
        <dbReference type="UniProtKB" id="O75417"/>
    </source>
</evidence>
<evidence type="ECO:0000255" key="3">
    <source>
        <dbReference type="PROSITE-ProRule" id="PRU00541"/>
    </source>
</evidence>
<evidence type="ECO:0000255" key="4">
    <source>
        <dbReference type="PROSITE-ProRule" id="PRU00542"/>
    </source>
</evidence>
<evidence type="ECO:0000269" key="5">
    <source>
    </source>
</evidence>
<evidence type="ECO:0000269" key="6">
    <source>
    </source>
</evidence>
<evidence type="ECO:0000269" key="7">
    <source>
    </source>
</evidence>
<evidence type="ECO:0000269" key="8">
    <source>
    </source>
</evidence>
<evidence type="ECO:0000303" key="9">
    <source>
    </source>
</evidence>
<evidence type="ECO:0000305" key="10"/>
<evidence type="ECO:0000312" key="11">
    <source>
        <dbReference type="WormBase" id="W03A3.2"/>
    </source>
</evidence>
<dbReference type="EC" id="2.7.7.7" evidence="2"/>
<dbReference type="EMBL" id="BX284603">
    <property type="protein sequence ID" value="CCD73325.2"/>
    <property type="molecule type" value="Genomic_DNA"/>
</dbReference>
<dbReference type="EMBL" id="FO081686">
    <property type="protein sequence ID" value="CCD73325.2"/>
    <property type="status" value="JOINED"/>
    <property type="molecule type" value="Genomic_DNA"/>
</dbReference>
<dbReference type="RefSeq" id="NP_001367994.1">
    <property type="nucleotide sequence ID" value="NM_001379729.2"/>
</dbReference>
<dbReference type="RefSeq" id="NP_498250.3">
    <property type="nucleotide sequence ID" value="NM_065849.4"/>
</dbReference>
<dbReference type="SMR" id="A0FLQ6"/>
<dbReference type="FunCoup" id="A0FLQ6">
    <property type="interactions" value="1689"/>
</dbReference>
<dbReference type="STRING" id="6239.W03A3.2.1"/>
<dbReference type="PaxDb" id="6239-W03A3.2"/>
<dbReference type="EnsemblMetazoa" id="W03A3.2.1">
    <property type="protein sequence ID" value="W03A3.2.1"/>
    <property type="gene ID" value="WBGene00020964"/>
</dbReference>
<dbReference type="GeneID" id="175810"/>
<dbReference type="UCSC" id="W03A3.2">
    <property type="organism name" value="c. elegans"/>
</dbReference>
<dbReference type="AGR" id="WB:WBGene00020964"/>
<dbReference type="WormBase" id="W03A3.2">
    <property type="protein sequence ID" value="CE54166"/>
    <property type="gene ID" value="WBGene00020964"/>
    <property type="gene designation" value="polq-1"/>
</dbReference>
<dbReference type="eggNOG" id="KOG0950">
    <property type="taxonomic scope" value="Eukaryota"/>
</dbReference>
<dbReference type="GeneTree" id="ENSGT00940000158694"/>
<dbReference type="HOGENOM" id="CLU_000818_0_0_1"/>
<dbReference type="InParanoid" id="A0FLQ6"/>
<dbReference type="OrthoDB" id="2320933at2759"/>
<dbReference type="PhylomeDB" id="A0FLQ6"/>
<dbReference type="PRO" id="PR:A0FLQ6"/>
<dbReference type="Proteomes" id="UP000001940">
    <property type="component" value="Chromosome III"/>
</dbReference>
<dbReference type="Bgee" id="WBGene00020964">
    <property type="expression patterns" value="Expressed in germ line (C elegans) and 4 other cell types or tissues"/>
</dbReference>
<dbReference type="GO" id="GO:0005634">
    <property type="term" value="C:nucleus"/>
    <property type="evidence" value="ECO:0007669"/>
    <property type="project" value="UniProtKB-SubCell"/>
</dbReference>
<dbReference type="GO" id="GO:0005524">
    <property type="term" value="F:ATP binding"/>
    <property type="evidence" value="ECO:0007669"/>
    <property type="project" value="UniProtKB-KW"/>
</dbReference>
<dbReference type="GO" id="GO:0003677">
    <property type="term" value="F:DNA binding"/>
    <property type="evidence" value="ECO:0007669"/>
    <property type="project" value="InterPro"/>
</dbReference>
<dbReference type="GO" id="GO:0003887">
    <property type="term" value="F:DNA-directed DNA polymerase activity"/>
    <property type="evidence" value="ECO:0000318"/>
    <property type="project" value="GO_Central"/>
</dbReference>
<dbReference type="GO" id="GO:0006287">
    <property type="term" value="P:base-excision repair, gap-filling"/>
    <property type="evidence" value="ECO:0000315"/>
    <property type="project" value="CACAO"/>
</dbReference>
<dbReference type="GO" id="GO:0071479">
    <property type="term" value="P:cellular response to ionizing radiation"/>
    <property type="evidence" value="ECO:0000316"/>
    <property type="project" value="UniProtKB"/>
</dbReference>
<dbReference type="GO" id="GO:0006261">
    <property type="term" value="P:DNA-templated DNA replication"/>
    <property type="evidence" value="ECO:0007669"/>
    <property type="project" value="InterPro"/>
</dbReference>
<dbReference type="GO" id="GO:0097681">
    <property type="term" value="P:double-strand break repair via alternative nonhomologous end joining"/>
    <property type="evidence" value="ECO:0000318"/>
    <property type="project" value="GO_Central"/>
</dbReference>
<dbReference type="CDD" id="cd08638">
    <property type="entry name" value="DNA_pol_A_theta"/>
    <property type="match status" value="1"/>
</dbReference>
<dbReference type="CDD" id="cd18795">
    <property type="entry name" value="SF2_C_Ski2"/>
    <property type="match status" value="1"/>
</dbReference>
<dbReference type="FunFam" id="1.10.3380.20:FF:000008">
    <property type="entry name" value="DNA polymerase theta"/>
    <property type="match status" value="1"/>
</dbReference>
<dbReference type="FunFam" id="3.40.50.300:FF:006046">
    <property type="entry name" value="DNA polymerase theta"/>
    <property type="match status" value="1"/>
</dbReference>
<dbReference type="FunFam" id="3.40.50.300:FF:000813">
    <property type="entry name" value="helicase POLQ-like isoform X1"/>
    <property type="match status" value="1"/>
</dbReference>
<dbReference type="Gene3D" id="1.10.3380.20">
    <property type="match status" value="1"/>
</dbReference>
<dbReference type="Gene3D" id="3.30.70.370">
    <property type="match status" value="1"/>
</dbReference>
<dbReference type="Gene3D" id="1.10.150.20">
    <property type="entry name" value="5' to 3' exonuclease, C-terminal subdomain"/>
    <property type="match status" value="1"/>
</dbReference>
<dbReference type="Gene3D" id="3.40.50.300">
    <property type="entry name" value="P-loop containing nucleotide triphosphate hydrolases"/>
    <property type="match status" value="2"/>
</dbReference>
<dbReference type="Gene3D" id="1.20.1060.10">
    <property type="entry name" value="Taq DNA Polymerase, Chain T, domain 4"/>
    <property type="match status" value="1"/>
</dbReference>
<dbReference type="InterPro" id="IPR011545">
    <property type="entry name" value="DEAD/DEAH_box_helicase_dom"/>
</dbReference>
<dbReference type="InterPro" id="IPR019760">
    <property type="entry name" value="DNA-dir_DNA_pol_A_CS"/>
</dbReference>
<dbReference type="InterPro" id="IPR001098">
    <property type="entry name" value="DNA-dir_DNA_pol_A_palm_dom"/>
</dbReference>
<dbReference type="InterPro" id="IPR043502">
    <property type="entry name" value="DNA/RNA_pol_sf"/>
</dbReference>
<dbReference type="InterPro" id="IPR002298">
    <property type="entry name" value="DNA_polymerase_A"/>
</dbReference>
<dbReference type="InterPro" id="IPR014001">
    <property type="entry name" value="Helicase_ATP-bd"/>
</dbReference>
<dbReference type="InterPro" id="IPR001650">
    <property type="entry name" value="Helicase_C-like"/>
</dbReference>
<dbReference type="InterPro" id="IPR046931">
    <property type="entry name" value="HTH_61"/>
</dbReference>
<dbReference type="InterPro" id="IPR027417">
    <property type="entry name" value="P-loop_NTPase"/>
</dbReference>
<dbReference type="InterPro" id="IPR048960">
    <property type="entry name" value="POLQ-like_helical"/>
</dbReference>
<dbReference type="PANTHER" id="PTHR10133">
    <property type="entry name" value="DNA POLYMERASE I"/>
    <property type="match status" value="1"/>
</dbReference>
<dbReference type="PANTHER" id="PTHR10133:SF62">
    <property type="entry name" value="DNA POLYMERASE THETA"/>
    <property type="match status" value="1"/>
</dbReference>
<dbReference type="Pfam" id="PF00270">
    <property type="entry name" value="DEAD"/>
    <property type="match status" value="1"/>
</dbReference>
<dbReference type="Pfam" id="PF00476">
    <property type="entry name" value="DNA_pol_A"/>
    <property type="match status" value="1"/>
</dbReference>
<dbReference type="Pfam" id="PF00271">
    <property type="entry name" value="Helicase_C"/>
    <property type="match status" value="1"/>
</dbReference>
<dbReference type="Pfam" id="PF20470">
    <property type="entry name" value="HTH_61"/>
    <property type="match status" value="1"/>
</dbReference>
<dbReference type="Pfam" id="PF21099">
    <property type="entry name" value="POLQ_helical"/>
    <property type="match status" value="1"/>
</dbReference>
<dbReference type="PRINTS" id="PR00868">
    <property type="entry name" value="DNAPOLI"/>
</dbReference>
<dbReference type="SMART" id="SM00487">
    <property type="entry name" value="DEXDc"/>
    <property type="match status" value="1"/>
</dbReference>
<dbReference type="SMART" id="SM00490">
    <property type="entry name" value="HELICc"/>
    <property type="match status" value="1"/>
</dbReference>
<dbReference type="SMART" id="SM00482">
    <property type="entry name" value="POLAc"/>
    <property type="match status" value="1"/>
</dbReference>
<dbReference type="SUPFAM" id="SSF56672">
    <property type="entry name" value="DNA/RNA polymerases"/>
    <property type="match status" value="1"/>
</dbReference>
<dbReference type="SUPFAM" id="SSF52540">
    <property type="entry name" value="P-loop containing nucleoside triphosphate hydrolases"/>
    <property type="match status" value="2"/>
</dbReference>
<dbReference type="SUPFAM" id="SSF158702">
    <property type="entry name" value="Sec63 N-terminal domain-like"/>
    <property type="match status" value="1"/>
</dbReference>
<dbReference type="PROSITE" id="PS00447">
    <property type="entry name" value="DNA_POLYMERASE_A"/>
    <property type="match status" value="1"/>
</dbReference>
<dbReference type="PROSITE" id="PS51192">
    <property type="entry name" value="HELICASE_ATP_BIND_1"/>
    <property type="match status" value="1"/>
</dbReference>
<dbReference type="PROSITE" id="PS51194">
    <property type="entry name" value="HELICASE_CTER"/>
    <property type="match status" value="1"/>
</dbReference>
<sequence>MDEASCRFPEWVSSKIIDYYAEQNIKALFDWQIDVLNEARQFEDQHLIFSAPTSAGKSIVAELLSWKVASTGRKVLFVLPYISVAREKLHQIQRCWRRDDISVCGFIGPQASNPNEWLGAVCTIEKAASLTNRALSEDWFEEIGMIVVDEMHMVFDSSRGAHIEHMLSKVLLWNQSALEKVRIIGMSATIPELYRIGKWLDGAKVFEARFRPIVLQNHIVIGSELRKSGDNKVLREFSEDPLILLTEESFRRNSQTLVMISSKLDAEKTALNIASRFHEINKTDSSLLEILKERANGLLFIKHGLERNGCKDRNVMSTLAWGVAYHHAGLTMEERECIELGFREKNIVILVATSTLASGVNLPAERVLIKAQPRGPSALTSLNYRQMVGRAGRTGHATRGETYLLIKKCDRDAVLKIIETPIDQGVLTRKRDAERTNLSRFILEGICTGLTTTRSQIHDLCKLLLFNSENLQLSDIAIEMLLRNSFISQDENDDQLSPTQLGRAAIASSLPPEASLAIFEDLNSASRAIALDTELHMLYLVTPINVSVWQECDWHHLFSIFSKLPSDHKRIAKLVGVSEKFILDQLQGRRNDKLLQIHIRFFSALALFDLISEMSIYEVSHKYRIPRGCLQTLQSQSATYAAMIVAFCLRLGWTYLKALLDGFATRLLFGVRSELSELVAIEGIDGQRARILHERGVTCLSHLSACDSSKLAHFLTLAVPYSSSNSNDGLGEWLFGEPRMRVDVAARTLKERARKVLIRRVQELGISVELPKFEENEENIQESCDSGLPDSCEGMEDELEEKENIVKMEEMTKSVTEMSLTDNTISFKSEDDLFKKEIKVEEDEVFIKKEIDEDEEEIVEETVIECLETSLLKLKASTDEVFLRRLSQTFSPIGRSRSILNNSLLEDSFDRPVPRSSIPILNFITPKRESPTPYFEDSFDRPIPGSLPISSSRRKSVLTNIANLDSSRRESINSNASDNNSFDVFVTPPTKSAKEEKRRIAVKHPRVGNIIYSPLTSSPVIKHPKLEINHFYLKDVCHDHNAWNLWTKSSTSTSSCSIRVSDDYTGIAIRTDAGNTFIPLLETFGGEPSPASKYFESFSKCIIPLNTRLEFLKTLAVTVEMYISSMEDAFLIFEKFGIKIFRLKVVRIAAYLNNVIDVEQEENSNFLPILMDRYSILDPEIRKTCSSSLHKAAVEVYSLKPIFEKMCCSGASLQLEMESCQTVLNIFYSGIVFDQALCNSFIYKIRKQIENLEENIWRLAYGKFNIHSSNEVANVLFYRLGLIYPETSGCKPKLRHLPTNKLILEQMNTQHPIVGKILEYRQIQHTLTQCLMPLAKFIGRIHCWFEMCTSTGRILTSVPNLQNVPKRISSDGMSARQLFIANSENLLIGADYKQLELRVLAHLSNDSNLVNLITSDRDLFEELSIQWNFPRDAVKQLCYGLIYGMGAKSLSELTRMSIEDAEKMLKAFFAMFPGVRSYINETKEKVCKEEPISTIIGRRTIIKASGIGEERARIERVAVNYTIQGSASEIFKTAIVDIESKIKEFGAQIVLTIHDEVLVECPEIHVAAASESIENCMQNALSHLLRVPMRVSMKTGRSWADLK</sequence>
<gene>
    <name evidence="9 11" type="primary">polq-1</name>
    <name evidence="11" type="ORF">W03A3.2</name>
</gene>
<feature type="chain" id="PRO_0000432703" description="DNA polymerase theta">
    <location>
        <begin position="1"/>
        <end position="1603"/>
    </location>
</feature>
<feature type="domain" description="Helicase ATP-binding" evidence="3">
    <location>
        <begin position="38"/>
        <end position="208"/>
    </location>
</feature>
<feature type="domain" description="Helicase C-terminal" evidence="4">
    <location>
        <begin position="283"/>
        <end position="434"/>
    </location>
</feature>
<feature type="short sequence motif" description="DEAH box" evidence="3">
    <location>
        <begin position="149"/>
        <end position="152"/>
    </location>
</feature>
<feature type="binding site" evidence="3">
    <location>
        <begin position="51"/>
        <end position="58"/>
    </location>
    <ligand>
        <name>ATP</name>
        <dbReference type="ChEBI" id="CHEBI:30616"/>
    </ligand>
</feature>
<feature type="mutagenesis site" description="Loss of sequences surrounding G-quadruplex (G4) DNA sites." evidence="6">
    <original>P</original>
    <variation>S</variation>
    <location>
        <position position="1359"/>
    </location>
</feature>
<proteinExistence type="evidence at protein level"/>
<protein>
    <recommendedName>
        <fullName evidence="2">DNA polymerase theta</fullName>
        <ecNumber evidence="2">2.7.7.7</ecNumber>
    </recommendedName>
</protein>